<comment type="function">
    <text evidence="1">Located on the platform of the 30S subunit, it bridges several disparate RNA helices of the 16S rRNA. Forms part of the Shine-Dalgarno cleft in the 70S ribosome.</text>
</comment>
<comment type="subunit">
    <text evidence="1">Part of the 30S ribosomal subunit. Interacts with proteins S7 and S18. Binds to IF-3.</text>
</comment>
<comment type="similarity">
    <text evidence="1">Belongs to the universal ribosomal protein uS11 family.</text>
</comment>
<dbReference type="EMBL" id="CP000950">
    <property type="protein sequence ID" value="ACA66619.1"/>
    <property type="molecule type" value="Genomic_DNA"/>
</dbReference>
<dbReference type="RefSeq" id="WP_002218948.1">
    <property type="nucleotide sequence ID" value="NZ_CP009792.1"/>
</dbReference>
<dbReference type="SMR" id="B1JJG8"/>
<dbReference type="GeneID" id="96663173"/>
<dbReference type="KEGG" id="ypy:YPK_0306"/>
<dbReference type="PATRIC" id="fig|502800.11.peg.913"/>
<dbReference type="GO" id="GO:1990904">
    <property type="term" value="C:ribonucleoprotein complex"/>
    <property type="evidence" value="ECO:0007669"/>
    <property type="project" value="UniProtKB-KW"/>
</dbReference>
<dbReference type="GO" id="GO:0005840">
    <property type="term" value="C:ribosome"/>
    <property type="evidence" value="ECO:0007669"/>
    <property type="project" value="UniProtKB-KW"/>
</dbReference>
<dbReference type="GO" id="GO:0019843">
    <property type="term" value="F:rRNA binding"/>
    <property type="evidence" value="ECO:0007669"/>
    <property type="project" value="UniProtKB-UniRule"/>
</dbReference>
<dbReference type="GO" id="GO:0003735">
    <property type="term" value="F:structural constituent of ribosome"/>
    <property type="evidence" value="ECO:0007669"/>
    <property type="project" value="InterPro"/>
</dbReference>
<dbReference type="GO" id="GO:0006412">
    <property type="term" value="P:translation"/>
    <property type="evidence" value="ECO:0007669"/>
    <property type="project" value="UniProtKB-UniRule"/>
</dbReference>
<dbReference type="FunFam" id="3.30.420.80:FF:000001">
    <property type="entry name" value="30S ribosomal protein S11"/>
    <property type="match status" value="1"/>
</dbReference>
<dbReference type="Gene3D" id="3.30.420.80">
    <property type="entry name" value="Ribosomal protein S11"/>
    <property type="match status" value="1"/>
</dbReference>
<dbReference type="HAMAP" id="MF_01310">
    <property type="entry name" value="Ribosomal_uS11"/>
    <property type="match status" value="1"/>
</dbReference>
<dbReference type="InterPro" id="IPR001971">
    <property type="entry name" value="Ribosomal_uS11"/>
</dbReference>
<dbReference type="InterPro" id="IPR019981">
    <property type="entry name" value="Ribosomal_uS11_bac-type"/>
</dbReference>
<dbReference type="InterPro" id="IPR018102">
    <property type="entry name" value="Ribosomal_uS11_CS"/>
</dbReference>
<dbReference type="InterPro" id="IPR036967">
    <property type="entry name" value="Ribosomal_uS11_sf"/>
</dbReference>
<dbReference type="NCBIfam" id="NF003698">
    <property type="entry name" value="PRK05309.1"/>
    <property type="match status" value="1"/>
</dbReference>
<dbReference type="NCBIfam" id="TIGR03632">
    <property type="entry name" value="uS11_bact"/>
    <property type="match status" value="1"/>
</dbReference>
<dbReference type="PANTHER" id="PTHR11759">
    <property type="entry name" value="40S RIBOSOMAL PROTEIN S14/30S RIBOSOMAL PROTEIN S11"/>
    <property type="match status" value="1"/>
</dbReference>
<dbReference type="Pfam" id="PF00411">
    <property type="entry name" value="Ribosomal_S11"/>
    <property type="match status" value="1"/>
</dbReference>
<dbReference type="PIRSF" id="PIRSF002131">
    <property type="entry name" value="Ribosomal_S11"/>
    <property type="match status" value="1"/>
</dbReference>
<dbReference type="SUPFAM" id="SSF53137">
    <property type="entry name" value="Translational machinery components"/>
    <property type="match status" value="1"/>
</dbReference>
<dbReference type="PROSITE" id="PS00054">
    <property type="entry name" value="RIBOSOMAL_S11"/>
    <property type="match status" value="1"/>
</dbReference>
<reference key="1">
    <citation type="submission" date="2008-02" db="EMBL/GenBank/DDBJ databases">
        <title>Complete sequence of Yersinia pseudotuberculosis YPIII.</title>
        <authorList>
            <consortium name="US DOE Joint Genome Institute"/>
            <person name="Copeland A."/>
            <person name="Lucas S."/>
            <person name="Lapidus A."/>
            <person name="Glavina del Rio T."/>
            <person name="Dalin E."/>
            <person name="Tice H."/>
            <person name="Bruce D."/>
            <person name="Goodwin L."/>
            <person name="Pitluck S."/>
            <person name="Munk A.C."/>
            <person name="Brettin T."/>
            <person name="Detter J.C."/>
            <person name="Han C."/>
            <person name="Tapia R."/>
            <person name="Schmutz J."/>
            <person name="Larimer F."/>
            <person name="Land M."/>
            <person name="Hauser L."/>
            <person name="Challacombe J.F."/>
            <person name="Green L."/>
            <person name="Lindler L.E."/>
            <person name="Nikolich M.P."/>
            <person name="Richardson P."/>
        </authorList>
    </citation>
    <scope>NUCLEOTIDE SEQUENCE [LARGE SCALE GENOMIC DNA]</scope>
    <source>
        <strain>YPIII</strain>
    </source>
</reference>
<proteinExistence type="inferred from homology"/>
<keyword id="KW-0687">Ribonucleoprotein</keyword>
<keyword id="KW-0689">Ribosomal protein</keyword>
<keyword id="KW-0694">RNA-binding</keyword>
<keyword id="KW-0699">rRNA-binding</keyword>
<gene>
    <name evidence="1" type="primary">rpsK</name>
    <name type="ordered locus">YPK_0306</name>
</gene>
<name>RS11_YERPY</name>
<protein>
    <recommendedName>
        <fullName evidence="1">Small ribosomal subunit protein uS11</fullName>
    </recommendedName>
    <alternativeName>
        <fullName evidence="2">30S ribosomal protein S11</fullName>
    </alternativeName>
</protein>
<organism>
    <name type="scientific">Yersinia pseudotuberculosis serotype O:3 (strain YPIII)</name>
    <dbReference type="NCBI Taxonomy" id="502800"/>
    <lineage>
        <taxon>Bacteria</taxon>
        <taxon>Pseudomonadati</taxon>
        <taxon>Pseudomonadota</taxon>
        <taxon>Gammaproteobacteria</taxon>
        <taxon>Enterobacterales</taxon>
        <taxon>Yersiniaceae</taxon>
        <taxon>Yersinia</taxon>
    </lineage>
</organism>
<sequence length="129" mass="13832">MAKAPIRARKRVRKTVSDGVAHIHASFNNTIVTITDRQGNALGWATAGGSGFRGSRKSTPFAAQVAAERCAEAVKEYGIKNLEVMVKGPGPGRESTIRALNAAGFRITNITDVTPIPHNGCRPPKKRRV</sequence>
<evidence type="ECO:0000255" key="1">
    <source>
        <dbReference type="HAMAP-Rule" id="MF_01310"/>
    </source>
</evidence>
<evidence type="ECO:0000305" key="2"/>
<feature type="chain" id="PRO_1000141165" description="Small ribosomal subunit protein uS11">
    <location>
        <begin position="1"/>
        <end position="129"/>
    </location>
</feature>
<accession>B1JJG8</accession>